<name>DNPH1_RAT</name>
<proteinExistence type="evidence at protein level"/>
<comment type="function">
    <text evidence="1">Part of a nucleotide salvage pathway that eliminates epigenetically modified 5-hydroxymethyl-dCMP (hmdCMP) in a two-step process entailing deamination to cytotoxic 5-hydroxymethyl-dUMP (hmdUMP), followed by its hydrolysis into 5-hydroxymethyluracil (hmU) and 2-deoxy-D-ribose 5-phosphate (deoxyribosephosphate). Catalyzes the second step in that pathway, the hydrolysis of the N-glycosidic bond in hmdUMP, degrading this cytotoxic nucleotide to avoid its genomic integration.</text>
</comment>
<comment type="catalytic activity">
    <reaction evidence="1">
        <text>5-hydroxymethyl-dUMP + H2O = 5-hydroxymethyluracil + 2-deoxy-D-ribose 5-phosphate</text>
        <dbReference type="Rhea" id="RHEA:77099"/>
        <dbReference type="ChEBI" id="CHEBI:15377"/>
        <dbReference type="ChEBI" id="CHEBI:16964"/>
        <dbReference type="ChEBI" id="CHEBI:62877"/>
        <dbReference type="ChEBI" id="CHEBI:90409"/>
    </reaction>
    <physiologicalReaction direction="left-to-right" evidence="1">
        <dbReference type="Rhea" id="RHEA:77100"/>
    </physiologicalReaction>
</comment>
<comment type="biophysicochemical properties">
    <kinetics>
        <KM evidence="3">48 uM for dGMP</KM>
        <KM evidence="3">250 uM for dAMP</KM>
        <KM evidence="3">450 uM for dIMP</KM>
        <KM evidence="3">4 mM for dCMP</KM>
        <KM evidence="3">15.6 mM for dUMP</KM>
        <Vmax evidence="3">0.09 umol/min/mg enzyme toward dGMP</Vmax>
    </kinetics>
    <phDependence>
        <text evidence="3">Optimum pH is 6.0 with dGMP or dCMP as substrate.</text>
    </phDependence>
</comment>
<comment type="subunit">
    <text evidence="3 4 5 8">Monomer and homodimer.</text>
</comment>
<comment type="subcellular location">
    <subcellularLocation>
        <location evidence="1">Cytoplasm</location>
    </subcellularLocation>
    <subcellularLocation>
        <location evidence="9">Nucleus</location>
    </subcellularLocation>
</comment>
<comment type="tissue specificity">
    <text evidence="9">Highly expressed in heart, kidney, liver and spleen. Weakly expressed in lung and skeletal muscle.</text>
</comment>
<comment type="induction">
    <text evidence="9">Up-regulated in response to c-Myc and by partial hepatectomy.</text>
</comment>
<comment type="mass spectrometry" mass="17649.54" error="0.92" method="Electrospray" evidence="3"/>
<comment type="similarity">
    <text evidence="2">Belongs to the 2'-deoxynucleoside 5'-phosphate N-hydrolase 1 family.</text>
</comment>
<comment type="caution">
    <text evidence="1 3 5 7 8">Originally described for its in vitro hydrolytic activity towards dGMP, dAMP and dIMP (PubMed:17234634, PubMed:19822152, PubMed:24260472, PubMed:25108359). However, this was not confirmed in vivo (By similarity).</text>
</comment>
<keyword id="KW-0002">3D-structure</keyword>
<keyword id="KW-0007">Acetylation</keyword>
<keyword id="KW-0963">Cytoplasm</keyword>
<keyword id="KW-0326">Glycosidase</keyword>
<keyword id="KW-0378">Hydrolase</keyword>
<keyword id="KW-0546">Nucleotide metabolism</keyword>
<keyword id="KW-0539">Nucleus</keyword>
<keyword id="KW-0597">Phosphoprotein</keyword>
<keyword id="KW-1185">Reference proteome</keyword>
<evidence type="ECO:0000250" key="1">
    <source>
        <dbReference type="UniProtKB" id="O43598"/>
    </source>
</evidence>
<evidence type="ECO:0000255" key="2">
    <source>
        <dbReference type="HAMAP-Rule" id="MF_03036"/>
    </source>
</evidence>
<evidence type="ECO:0000269" key="3">
    <source>
    </source>
</evidence>
<evidence type="ECO:0000269" key="4">
    <source>
    </source>
</evidence>
<evidence type="ECO:0000269" key="5">
    <source>
    </source>
</evidence>
<evidence type="ECO:0000269" key="6">
    <source>
    </source>
</evidence>
<evidence type="ECO:0000269" key="7">
    <source>
    </source>
</evidence>
<evidence type="ECO:0000269" key="8">
    <source>
    </source>
</evidence>
<evidence type="ECO:0000269" key="9">
    <source>
    </source>
</evidence>
<evidence type="ECO:0000303" key="10">
    <source>
    </source>
</evidence>
<evidence type="ECO:0000303" key="11">
    <source>
    </source>
</evidence>
<evidence type="ECO:0000312" key="12">
    <source>
        <dbReference type="RGD" id="620382"/>
    </source>
</evidence>
<evidence type="ECO:0007744" key="13">
    <source>
        <dbReference type="PDB" id="2KHZ"/>
    </source>
</evidence>
<evidence type="ECO:0007744" key="14">
    <source>
        <dbReference type="PDB" id="2KLH"/>
    </source>
</evidence>
<evidence type="ECO:0007744" key="15">
    <source>
        <dbReference type="PDB" id="4FYH"/>
    </source>
</evidence>
<evidence type="ECO:0007744" key="16">
    <source>
        <dbReference type="PDB" id="4FYI"/>
    </source>
</evidence>
<evidence type="ECO:0007744" key="17">
    <source>
        <dbReference type="PDB" id="4FYK"/>
    </source>
</evidence>
<evidence type="ECO:0007744" key="18">
    <source>
        <dbReference type="PDB" id="4KXL"/>
    </source>
</evidence>
<evidence type="ECO:0007744" key="19">
    <source>
        <dbReference type="PDB" id="4KXM"/>
    </source>
</evidence>
<evidence type="ECO:0007744" key="20">
    <source>
        <dbReference type="PDB" id="4KXN"/>
    </source>
</evidence>
<evidence type="ECO:0007744" key="21">
    <source>
        <dbReference type="PDB" id="4P5D"/>
    </source>
</evidence>
<evidence type="ECO:0007744" key="22">
    <source>
    </source>
</evidence>
<evidence type="ECO:0007829" key="23">
    <source>
        <dbReference type="PDB" id="2KHZ"/>
    </source>
</evidence>
<evidence type="ECO:0007829" key="24">
    <source>
        <dbReference type="PDB" id="2KLH"/>
    </source>
</evidence>
<evidence type="ECO:0007829" key="25">
    <source>
        <dbReference type="PDB" id="4KXL"/>
    </source>
</evidence>
<evidence type="ECO:0007829" key="26">
    <source>
        <dbReference type="PDB" id="4P5D"/>
    </source>
</evidence>
<gene>
    <name evidence="12" type="primary">Dnph1</name>
    <name evidence="11" type="synonym">Rcl</name>
</gene>
<protein>
    <recommendedName>
        <fullName evidence="1">5-hydroxymethyl-dUMP N-hydrolase</fullName>
        <ecNumber evidence="1">3.2.2.-</ecNumber>
    </recommendedName>
    <alternativeName>
        <fullName evidence="12">2'-deoxynucleoside 5'-phosphate N-hydrolase 1</fullName>
    </alternativeName>
    <alternativeName>
        <fullName evidence="10">Deoxyribonucleoside 5'-monophosphate N-glycosidase</fullName>
    </alternativeName>
    <alternativeName>
        <fullName evidence="11">c-Myc-responsive protein Rcl</fullName>
    </alternativeName>
</protein>
<sequence length="163" mass="17781">MAASGEQAPCSVYFCGSIRGGREDQALYARIVSRLRRYGKVLTEHVADAELEPLGEEAAGGDQFIHEQDLNWLQQADVVVAEVTQPSLGVGYELGRAVALGKPILCLFRPQSGRVLSAMIRGAADGSRFQVWDYAEGEVETMLDRYFEAYLPQKTASSSHPSA</sequence>
<accession>O35820</accession>
<organism>
    <name type="scientific">Rattus norvegicus</name>
    <name type="common">Rat</name>
    <dbReference type="NCBI Taxonomy" id="10116"/>
    <lineage>
        <taxon>Eukaryota</taxon>
        <taxon>Metazoa</taxon>
        <taxon>Chordata</taxon>
        <taxon>Craniata</taxon>
        <taxon>Vertebrata</taxon>
        <taxon>Euteleostomi</taxon>
        <taxon>Mammalia</taxon>
        <taxon>Eutheria</taxon>
        <taxon>Euarchontoglires</taxon>
        <taxon>Glires</taxon>
        <taxon>Rodentia</taxon>
        <taxon>Myomorpha</taxon>
        <taxon>Muroidea</taxon>
        <taxon>Muridae</taxon>
        <taxon>Murinae</taxon>
        <taxon>Rattus</taxon>
    </lineage>
</organism>
<feature type="initiator methionine" description="Removed" evidence="1 2 3">
    <location>
        <position position="1"/>
    </location>
</feature>
<feature type="chain" id="PRO_0000097202" description="5-hydroxymethyl-dUMP N-hydrolase">
    <location>
        <begin position="2"/>
        <end position="163"/>
    </location>
</feature>
<feature type="binding site" evidence="6 7 8 15 16 17 18 19 20 21">
    <location>
        <position position="16"/>
    </location>
    <ligand>
        <name>5-hydroxymethyl-dUMP</name>
        <dbReference type="ChEBI" id="CHEBI:90409"/>
        <note>ligand shared between homodimeric partners</note>
    </ligand>
</feature>
<feature type="binding site" evidence="6 7 8 15 16 17 18 19 20 21">
    <location>
        <position position="18"/>
    </location>
    <ligand>
        <name>5-hydroxymethyl-dUMP</name>
        <dbReference type="ChEBI" id="CHEBI:90409"/>
        <note>ligand shared between homodimeric partners</note>
    </ligand>
</feature>
<feature type="binding site" evidence="6 7 8 15 16 17 18 19 20 21">
    <location>
        <position position="19"/>
    </location>
    <ligand>
        <name>5-hydroxymethyl-dUMP</name>
        <dbReference type="ChEBI" id="CHEBI:90409"/>
        <note>ligand shared between homodimeric partners</note>
    </ligand>
</feature>
<feature type="binding site" evidence="6 7 8 15 16 17 18 19 20 21">
    <location>
        <position position="20"/>
    </location>
    <ligand>
        <name>5-hydroxymethyl-dUMP</name>
        <dbReference type="ChEBI" id="CHEBI:90409"/>
        <note>ligand shared between homodimeric partners</note>
    </ligand>
</feature>
<feature type="binding site" evidence="6 7 8 15 16 17 18 19 20 21">
    <location>
        <position position="87"/>
    </location>
    <ligand>
        <name>5-hydroxymethyl-dUMP</name>
        <dbReference type="ChEBI" id="CHEBI:90409"/>
        <note>ligand shared between homodimeric partners</note>
    </ligand>
</feature>
<feature type="binding site" evidence="6 7 8 15 16 17 18 19 20 21">
    <location>
        <position position="89"/>
    </location>
    <ligand>
        <name>5-hydroxymethyl-dUMP</name>
        <dbReference type="ChEBI" id="CHEBI:90409"/>
        <note>ligand shared between homodimeric partners</note>
    </ligand>
</feature>
<feature type="binding site" evidence="6 7 8 15 16 17 18 19 20 21">
    <location>
        <position position="93"/>
    </location>
    <ligand>
        <name>5-hydroxymethyl-dUMP</name>
        <dbReference type="ChEBI" id="CHEBI:90409"/>
        <note>ligand shared between homodimeric partners</note>
    </ligand>
</feature>
<feature type="binding site" description="in other chain" evidence="6 7 8 15 16 17 18 19 20 21">
    <location>
        <position position="117"/>
    </location>
    <ligand>
        <name>5-hydroxymethyl-dUMP</name>
        <dbReference type="ChEBI" id="CHEBI:90409"/>
        <note>ligand shared between homodimeric partners</note>
    </ligand>
</feature>
<feature type="modified residue" description="N-acetylalanine" evidence="1">
    <location>
        <position position="2"/>
    </location>
</feature>
<feature type="modified residue" description="Phosphoserine" evidence="1">
    <location>
        <position position="17"/>
    </location>
</feature>
<feature type="modified residue" description="Phosphoserine" evidence="1">
    <location>
        <position position="87"/>
    </location>
</feature>
<feature type="modified residue" description="Phosphoserine" evidence="1">
    <location>
        <position position="112"/>
    </location>
</feature>
<feature type="modified residue" description="Phosphoserine" evidence="22">
    <location>
        <position position="117"/>
    </location>
</feature>
<feature type="modified residue" description="Phosphoserine" evidence="1">
    <location>
        <position position="127"/>
    </location>
</feature>
<feature type="modified residue" description="Phosphoserine" evidence="1">
    <location>
        <position position="158"/>
    </location>
</feature>
<feature type="mutagenesis site" description="100-fold decrease binding affinity for GMP as substrate." evidence="4">
    <original>Y</original>
    <variation>A</variation>
    <location>
        <position position="13"/>
    </location>
</feature>
<feature type="mutagenesis site" description="100-fold increase in Km and 170-fold decrease in catalytic efficiency for dGMP as substrate." evidence="3 4">
    <original>E</original>
    <variation>A</variation>
    <location>
        <position position="93"/>
    </location>
</feature>
<feature type="strand" evidence="25">
    <location>
        <begin position="11"/>
        <end position="15"/>
    </location>
</feature>
<feature type="strand" evidence="24">
    <location>
        <begin position="22"/>
        <end position="24"/>
    </location>
</feature>
<feature type="helix" evidence="25">
    <location>
        <begin position="25"/>
        <end position="35"/>
    </location>
</feature>
<feature type="turn" evidence="25">
    <location>
        <begin position="36"/>
        <end position="38"/>
    </location>
</feature>
<feature type="strand" evidence="25">
    <location>
        <begin position="39"/>
        <end position="41"/>
    </location>
</feature>
<feature type="helix" evidence="25">
    <location>
        <begin position="44"/>
        <end position="46"/>
    </location>
</feature>
<feature type="strand" evidence="23">
    <location>
        <begin position="50"/>
        <end position="52"/>
    </location>
</feature>
<feature type="helix" evidence="25">
    <location>
        <begin position="59"/>
        <end position="61"/>
    </location>
</feature>
<feature type="helix" evidence="25">
    <location>
        <begin position="62"/>
        <end position="75"/>
    </location>
</feature>
<feature type="strand" evidence="25">
    <location>
        <begin position="77"/>
        <end position="82"/>
    </location>
</feature>
<feature type="helix" evidence="25">
    <location>
        <begin position="88"/>
        <end position="100"/>
    </location>
</feature>
<feature type="strand" evidence="25">
    <location>
        <begin position="104"/>
        <end position="108"/>
    </location>
</feature>
<feature type="helix" evidence="25">
    <location>
        <begin position="110"/>
        <end position="112"/>
    </location>
</feature>
<feature type="helix" evidence="25">
    <location>
        <begin position="118"/>
        <end position="121"/>
    </location>
</feature>
<feature type="turn" evidence="25">
    <location>
        <begin position="126"/>
        <end position="128"/>
    </location>
</feature>
<feature type="strand" evidence="25">
    <location>
        <begin position="129"/>
        <end position="133"/>
    </location>
</feature>
<feature type="helix" evidence="26">
    <location>
        <begin position="136"/>
        <end position="138"/>
    </location>
</feature>
<feature type="helix" evidence="25">
    <location>
        <begin position="139"/>
        <end position="150"/>
    </location>
</feature>
<dbReference type="EC" id="3.2.2.-" evidence="1"/>
<dbReference type="EMBL" id="U82591">
    <property type="protein sequence ID" value="AAB95314.1"/>
    <property type="molecule type" value="mRNA"/>
</dbReference>
<dbReference type="RefSeq" id="NP_598209.1">
    <property type="nucleotide sequence ID" value="NM_133525.2"/>
</dbReference>
<dbReference type="PDB" id="2KHZ">
    <property type="method" value="NMR"/>
    <property type="chains" value="A/B=1-163"/>
</dbReference>
<dbReference type="PDB" id="2KLH">
    <property type="method" value="NMR"/>
    <property type="chains" value="A/B=11-151"/>
</dbReference>
<dbReference type="PDB" id="4FYH">
    <property type="method" value="X-ray"/>
    <property type="resolution" value="2.44 A"/>
    <property type="chains" value="A/B/C/D=11-151"/>
</dbReference>
<dbReference type="PDB" id="4FYI">
    <property type="method" value="X-ray"/>
    <property type="resolution" value="1.96 A"/>
    <property type="chains" value="A/B/C/D=11-151"/>
</dbReference>
<dbReference type="PDB" id="4FYK">
    <property type="method" value="X-ray"/>
    <property type="resolution" value="1.79 A"/>
    <property type="chains" value="A/B/C/D=11-151"/>
</dbReference>
<dbReference type="PDB" id="4KXL">
    <property type="method" value="X-ray"/>
    <property type="resolution" value="1.69 A"/>
    <property type="chains" value="A/B/C/D=11-151"/>
</dbReference>
<dbReference type="PDB" id="4KXM">
    <property type="method" value="X-ray"/>
    <property type="resolution" value="2.24 A"/>
    <property type="chains" value="A/B/C/D=11-151"/>
</dbReference>
<dbReference type="PDB" id="4KXN">
    <property type="method" value="X-ray"/>
    <property type="resolution" value="1.90 A"/>
    <property type="chains" value="A/B/C/D=11-151"/>
</dbReference>
<dbReference type="PDB" id="4P5D">
    <property type="method" value="X-ray"/>
    <property type="resolution" value="2.11 A"/>
    <property type="chains" value="A/C=11-151"/>
</dbReference>
<dbReference type="PDBsum" id="2KHZ"/>
<dbReference type="PDBsum" id="2KLH"/>
<dbReference type="PDBsum" id="4FYH"/>
<dbReference type="PDBsum" id="4FYI"/>
<dbReference type="PDBsum" id="4FYK"/>
<dbReference type="PDBsum" id="4KXL"/>
<dbReference type="PDBsum" id="4KXM"/>
<dbReference type="PDBsum" id="4KXN"/>
<dbReference type="PDBsum" id="4P5D"/>
<dbReference type="BMRB" id="O35820"/>
<dbReference type="SMR" id="O35820"/>
<dbReference type="FunCoup" id="O35820">
    <property type="interactions" value="751"/>
</dbReference>
<dbReference type="STRING" id="10116.ENSRNOP00000024815"/>
<dbReference type="BindingDB" id="O35820"/>
<dbReference type="ChEMBL" id="CHEMBL3329079"/>
<dbReference type="DrugCentral" id="O35820"/>
<dbReference type="GlyGen" id="O35820">
    <property type="glycosylation" value="4 sites"/>
</dbReference>
<dbReference type="iPTMnet" id="O35820"/>
<dbReference type="PhosphoSitePlus" id="O35820"/>
<dbReference type="jPOST" id="O35820"/>
<dbReference type="PaxDb" id="10116-ENSRNOP00000024815"/>
<dbReference type="Ensembl" id="ENSRNOT00000024815.7">
    <property type="protein sequence ID" value="ENSRNOP00000024815.5"/>
    <property type="gene ID" value="ENSRNOG00000018397.7"/>
</dbReference>
<dbReference type="GeneID" id="171047"/>
<dbReference type="KEGG" id="rno:171047"/>
<dbReference type="UCSC" id="RGD:620382">
    <property type="organism name" value="rat"/>
</dbReference>
<dbReference type="AGR" id="RGD:620382"/>
<dbReference type="CTD" id="10591"/>
<dbReference type="RGD" id="620382">
    <property type="gene designation" value="Dnph1"/>
</dbReference>
<dbReference type="eggNOG" id="ENOG502S2J2">
    <property type="taxonomic scope" value="Eukaryota"/>
</dbReference>
<dbReference type="GeneTree" id="ENSGT00390000001216"/>
<dbReference type="HOGENOM" id="CLU_100069_0_0_1"/>
<dbReference type="InParanoid" id="O35820"/>
<dbReference type="OMA" id="EVLSWHV"/>
<dbReference type="OrthoDB" id="18087at2759"/>
<dbReference type="PhylomeDB" id="O35820"/>
<dbReference type="TreeFam" id="TF329719"/>
<dbReference type="Reactome" id="R-RNO-74259">
    <property type="pathway name" value="Purine catabolism"/>
</dbReference>
<dbReference type="EvolutionaryTrace" id="O35820"/>
<dbReference type="PRO" id="PR:O35820"/>
<dbReference type="Proteomes" id="UP000002494">
    <property type="component" value="Chromosome 9"/>
</dbReference>
<dbReference type="Bgee" id="ENSRNOG00000018397">
    <property type="expression patterns" value="Expressed in pancreas and 19 other cell types or tissues"/>
</dbReference>
<dbReference type="GO" id="GO:0005737">
    <property type="term" value="C:cytoplasm"/>
    <property type="evidence" value="ECO:0000250"/>
    <property type="project" value="UniProtKB"/>
</dbReference>
<dbReference type="GO" id="GO:0005634">
    <property type="term" value="C:nucleus"/>
    <property type="evidence" value="ECO:0000314"/>
    <property type="project" value="UniProtKB"/>
</dbReference>
<dbReference type="GO" id="GO:0070694">
    <property type="term" value="F:5-hydroxymethyl-dUMP N-hydrolase activity"/>
    <property type="evidence" value="ECO:0000314"/>
    <property type="project" value="UniProtKB"/>
</dbReference>
<dbReference type="GO" id="GO:0042802">
    <property type="term" value="F:identical protein binding"/>
    <property type="evidence" value="ECO:0000266"/>
    <property type="project" value="RGD"/>
</dbReference>
<dbReference type="GO" id="GO:0042803">
    <property type="term" value="F:protein homodimerization activity"/>
    <property type="evidence" value="ECO:0000314"/>
    <property type="project" value="UniProtKB"/>
</dbReference>
<dbReference type="GO" id="GO:0000255">
    <property type="term" value="P:allantoin metabolic process"/>
    <property type="evidence" value="ECO:0000314"/>
    <property type="project" value="MGI"/>
</dbReference>
<dbReference type="GO" id="GO:0009159">
    <property type="term" value="P:deoxyribonucleoside monophosphate catabolic process"/>
    <property type="evidence" value="ECO:0000314"/>
    <property type="project" value="UniProtKB"/>
</dbReference>
<dbReference type="GO" id="GO:0046055">
    <property type="term" value="P:dGMP catabolic process"/>
    <property type="evidence" value="ECO:0000314"/>
    <property type="project" value="MGI"/>
</dbReference>
<dbReference type="GO" id="GO:0030855">
    <property type="term" value="P:epithelial cell differentiation"/>
    <property type="evidence" value="ECO:0000266"/>
    <property type="project" value="RGD"/>
</dbReference>
<dbReference type="GO" id="GO:0043174">
    <property type="term" value="P:nucleoside salvage"/>
    <property type="evidence" value="ECO:0000250"/>
    <property type="project" value="UniProtKB"/>
</dbReference>
<dbReference type="GO" id="GO:0030307">
    <property type="term" value="P:positive regulation of cell growth"/>
    <property type="evidence" value="ECO:0000314"/>
    <property type="project" value="UniProtKB"/>
</dbReference>
<dbReference type="FunFam" id="3.40.50.450:FF:000019">
    <property type="entry name" value="2'-deoxynucleoside 5'-phosphate N-hydrolase 1"/>
    <property type="match status" value="1"/>
</dbReference>
<dbReference type="Gene3D" id="3.40.50.450">
    <property type="match status" value="1"/>
</dbReference>
<dbReference type="HAMAP" id="MF_03036">
    <property type="entry name" value="Nuc_phosphate_hydrolase"/>
    <property type="match status" value="1"/>
</dbReference>
<dbReference type="InterPro" id="IPR051239">
    <property type="entry name" value="2'-dNMP_N-hydrolase"/>
</dbReference>
<dbReference type="InterPro" id="IPR028607">
    <property type="entry name" value="DNPH1"/>
</dbReference>
<dbReference type="InterPro" id="IPR007710">
    <property type="entry name" value="Nucleoside_deoxyribTrfase"/>
</dbReference>
<dbReference type="PANTHER" id="PTHR15364">
    <property type="entry name" value="2'-DEOXYNUCLEOSIDE 5'-PHOSPHATE N-HYDROLASE 1"/>
    <property type="match status" value="1"/>
</dbReference>
<dbReference type="PANTHER" id="PTHR15364:SF0">
    <property type="entry name" value="2'-DEOXYNUCLEOSIDE 5'-PHOSPHATE N-HYDROLASE 1"/>
    <property type="match status" value="1"/>
</dbReference>
<dbReference type="Pfam" id="PF05014">
    <property type="entry name" value="Nuc_deoxyrib_tr"/>
    <property type="match status" value="1"/>
</dbReference>
<dbReference type="SUPFAM" id="SSF52309">
    <property type="entry name" value="N-(deoxy)ribosyltransferase-like"/>
    <property type="match status" value="1"/>
</dbReference>
<reference key="1">
    <citation type="journal article" date="1997" name="Mol. Cell. Biol.">
        <title>Identification of putative c-Myc-responsive genes: characterization of rcl, a novel growth-related gene.</title>
        <authorList>
            <person name="Lewis B.C."/>
            <person name="Shim H."/>
            <person name="Li Q."/>
            <person name="Wu C.S."/>
            <person name="Lee L.A."/>
            <person name="Maity A."/>
            <person name="Dang C.V."/>
        </authorList>
    </citation>
    <scope>NUCLEOTIDE SEQUENCE [MRNA]</scope>
    <scope>SUBCELLULAR LOCATION</scope>
    <scope>TISSUE SPECIFICITY</scope>
    <scope>INDUCTION</scope>
    <source>
        <tissue>Liver</tissue>
    </source>
</reference>
<reference key="2">
    <citation type="journal article" date="2007" name="J. Biol. Chem.">
        <title>The c-Myc target gene Rcl (C6orf108) encodes a novel enzyme, deoxynucleoside 5'-monophosphate N-glycosidase.</title>
        <authorList>
            <person name="Ghiorghi Y.K."/>
            <person name="Zeller K.I."/>
            <person name="Dang C.V."/>
            <person name="Kaminski P.A."/>
        </authorList>
    </citation>
    <scope>MASS SPECTROMETRY</scope>
    <scope>BIOPHYSICOCHEMICAL PROPERTIES</scope>
    <scope>HOMODIMERIZATION</scope>
    <scope>SUBUNIT</scope>
    <scope>CAUTION</scope>
    <scope>CLEAVAGE OF INITIATOR METHIONINE</scope>
    <scope>MUTAGENESIS OF GLU-93</scope>
</reference>
<reference key="3">
    <citation type="journal article" date="2012" name="Nat. Commun.">
        <title>Quantitative maps of protein phosphorylation sites across 14 different rat organs and tissues.</title>
        <authorList>
            <person name="Lundby A."/>
            <person name="Secher A."/>
            <person name="Lage K."/>
            <person name="Nordsborg N.B."/>
            <person name="Dmytriyev A."/>
            <person name="Lundby C."/>
            <person name="Olsen J.V."/>
        </authorList>
    </citation>
    <scope>PHOSPHORYLATION [LARGE SCALE ANALYSIS] AT SER-117</scope>
    <scope>IDENTIFICATION BY MASS SPECTROMETRY [LARGE SCALE ANALYSIS]</scope>
</reference>
<reference evidence="13" key="4">
    <citation type="journal article" date="2009" name="J. Mol. Biol.">
        <title>Solution structure of RCL, a novel 2'-deoxyribonucleoside 5'-monophosphate N-glycosidase.</title>
        <authorList>
            <person name="Doddapaneni K."/>
            <person name="Mahler B."/>
            <person name="Pavlovicz R."/>
            <person name="Haushalter A."/>
            <person name="Yuan C."/>
            <person name="Wu Z."/>
        </authorList>
    </citation>
    <scope>STRUCTURE BY NMR</scope>
    <scope>MUTAGENESIS OF TYR-13 AND GLU-93</scope>
    <scope>SUBUNIT</scope>
</reference>
<reference evidence="14" key="5">
    <citation type="journal article" date="2009" name="J. Mol. Biol.">
        <title>Structural characterization of the mammalian deoxynucleotide N-hydrolase Rcl and its stabilizing interactions with two inhibitors.</title>
        <authorList>
            <person name="Yang Y."/>
            <person name="Padilla A."/>
            <person name="Zhang C."/>
            <person name="Labesse G."/>
            <person name="Kaminski P.A."/>
        </authorList>
    </citation>
    <scope>STRUCTURE BY NMR OF 11-151 IN COMPLEX WITH GMP</scope>
    <scope>SUBUNIT</scope>
    <scope>CAUTION</scope>
</reference>
<reference evidence="15 16 17" key="6">
    <citation type="journal article" date="2013" name="Acta Crystallogr. D">
        <title>Structure of the oncoprotein Rcl bound to three nucleotide analogues.</title>
        <authorList>
            <person name="Padilla A."/>
            <person name="Amiable C."/>
            <person name="Pochet S."/>
            <person name="Kaminski P.A."/>
            <person name="Labesse G."/>
        </authorList>
    </citation>
    <scope>X-RAY CRYSTALLOGRAPHY (1.79 ANGSTROMS) OF 11-151 IN COMPLEX WITH SUBSTRATE ANALOGS</scope>
</reference>
<reference evidence="18 19 20" key="7">
    <citation type="journal article" date="2013" name="PLoS ONE">
        <title>N (6)-substituted AMPs inhibit mammalian deoxynucleotide N-hydrolase DNPH1.</title>
        <authorList>
            <person name="Amiable C."/>
            <person name="Pochet S."/>
            <person name="Padilla A."/>
            <person name="Labesse G."/>
            <person name="Kaminski P.A."/>
        </authorList>
    </citation>
    <scope>X-RAY CRYSTALLOGRAPHY (1.69 ANGSTROMS) OF 11-151 IN COMPLEX WITH SUBSTRATE ANALOGS</scope>
    <scope>CAUTION</scope>
</reference>
<reference evidence="21" key="8">
    <citation type="journal article" date="2014" name="Eur. J. Med. Chem.">
        <title>6-(Hetero)Arylpurine nucleotides as inhibitors of the oncogenic target DNPH1: Synthesis, structural studies and cytotoxic activities.</title>
        <authorList>
            <person name="Amiable C."/>
            <person name="Paoletti J."/>
            <person name="Haouz A."/>
            <person name="Padilla A."/>
            <person name="Labesse G."/>
            <person name="Kaminski P.A."/>
            <person name="Pochet S."/>
        </authorList>
    </citation>
    <scope>X-RAY CRYSTALLOGRAPHY (2.11 ANGSTROMS) OF 11-151 IN COMPLEX WITH THE SUBSTRATE ANALOG 6-(NAPHTHALEN-2-YL)-9-(5-O-PHOSPHONO-BETA-D-RIBOFURANOSYL)-9H-PURINE</scope>
    <scope>SUBUNIT</scope>
    <scope>CAUTION</scope>
</reference>